<gene>
    <name type="primary">gag-pol</name>
</gene>
<sequence length="1470" mass="165744">MGAATSALNRRQLDEFEHIRLRPNGKKKYQIKHLIWAGKKMDRFGLHEKLLETEEGCKKIIEVLSPLEPTGSEGMKSLYNLVCVLLCVHQEKKVKDTEEALAIVRQCCHLVDKEKTAVTPPGGQQKNNTGGTATPGGSQNFPAQQQGNAWVHVPLSPRTLNAWVKAVEEKKFGAEIVPMFQALSEGCTPYDINQMLNVLGDHQGALQIVKEIINEEAAQWDVTHPPPAGPLPAGQLRDPGGSDIAGTTSTVQEQLEWIYTANPRVDVGAIYRRWIILGLQKCVKMYNPVSVLDIRQGPKEPFKDYVDRFYKAIRAEQASGEVKQWMTESLLIQNANPDCKVILKGLGMHPTLEEMLTACQGVGGPSYKAKVMAEMMQNLQSQNMVQQGGGRGRPRPPPKCYNCGKFGHMQRQCPEPRKIKCLKCGKPGHLAKDCRGQVNFFRVWPVDGDKTKKFSRSHSWGGTKCAPSTEQLYTLRPSKEAPAAVCRERETNEKSEQKPPSEQSRLERGIFFELPLWRRPIRTCIIGGTAVKALLDTGADDTIIKDTDLQLRGSWRPKIVGGIGGGLNVKEYDNVEVQLEDKILRGTVLIGATPINIIGRNFLAQAGAKLVMGQLSQTIPITPVRLKEGARGPRLKQWPLSKEKIIALQEICKTLEEEGKLSRVGGDNAYNTPVFCIRKKDKSQWRMLVDFRELNKATQDFFEVQLGIPHPAGLKKMKQITIIDVGDAYYSIPLDPEFRKYTAFTIPTVNNEGPGIRYQFNCLPQGWKGSPTIFQNTASKILEEIKKELKQLTIVQYMDDLWVGSQEEGPKHDQLVQTLRNRLQEWGLETPEKKVQREPPFEWMGYKLWPHKWKLQSIELEKKEQWTVNDLQKLVGKLNWAAQLYPGLRTKNICKLLRGKKNLLDVVEWTPEAEAEYEENKEILKTEQEGTYYAPEKPLRAAVQKLGDGQWSYQFKQEGKILKVGKFAKQKATHTNELRVLAGVVQKIGKEALVIWGQLPTFELPVERDTWEQWWADYWQVSWIPEWDFVSVPPLVTLWYTLTKEPIPGEDVYYVDGACNRQSKEGKAGYITQQGKQRVQQLENTTNQQAELTAIKMALEDSGPKVNIVTDSQYAMGILTAQPTQSDSPLVEQIIAQMVQKEAIYLQWVPAHKGIGGNEEIDKLVSKGVRRILFIGRIEEAQEEHDRYHSNWRNLADTFGLPQIVAKEIVAMCPKCQVKGEPIHGQVDASPGVWQMDCTHIEGKIVIVAVHVASGFIEAEVIPRETGKETAKFLLKIIGRWPITHLHTDNGPNFTSQEVAAMCWWGKVEHTTGVPYNPQSQGSIESMNKQLKEIIGKIRDDCQYTETAVLMACHIHNFKRKGGIGGLTAAERLINMITTQLEINTLQTKIQKILNFRVYYREGRDPVWKGPARLIWKGEGAVVLKEGEELKVVPRRKAKIIKDYEPRKTLGDETHLEGAGGSDHQMAGDS</sequence>
<keyword id="KW-0064">Aspartyl protease</keyword>
<keyword id="KW-0167">Capsid protein</keyword>
<keyword id="KW-0229">DNA integration</keyword>
<keyword id="KW-0233">DNA recombination</keyword>
<keyword id="KW-0238">DNA-binding</keyword>
<keyword id="KW-0239">DNA-directed DNA polymerase</keyword>
<keyword id="KW-0255">Endonuclease</keyword>
<keyword id="KW-1262">Eukaryotic host gene expression shutoff by virus</keyword>
<keyword id="KW-1193">Eukaryotic host translation shutoff by virus</keyword>
<keyword id="KW-1032">Host cell membrane</keyword>
<keyword id="KW-1035">Host cytoplasm</keyword>
<keyword id="KW-1190">Host gene expression shutoff by virus</keyword>
<keyword id="KW-1043">Host membrane</keyword>
<keyword id="KW-1048">Host nucleus</keyword>
<keyword id="KW-0945">Host-virus interaction</keyword>
<keyword id="KW-0378">Hydrolase</keyword>
<keyword id="KW-0449">Lipoprotein</keyword>
<keyword id="KW-0460">Magnesium</keyword>
<keyword id="KW-0472">Membrane</keyword>
<keyword id="KW-0479">Metal-binding</keyword>
<keyword id="KW-0511">Multifunctional enzyme</keyword>
<keyword id="KW-0519">Myristate</keyword>
<keyword id="KW-0540">Nuclease</keyword>
<keyword id="KW-0548">Nucleotidyltransferase</keyword>
<keyword id="KW-0597">Phosphoprotein</keyword>
<keyword id="KW-0645">Protease</keyword>
<keyword id="KW-0677">Repeat</keyword>
<keyword id="KW-0688">Ribosomal frameshifting</keyword>
<keyword id="KW-0694">RNA-binding</keyword>
<keyword id="KW-0695">RNA-directed DNA polymerase</keyword>
<keyword id="KW-0808">Transferase</keyword>
<keyword id="KW-1179">Viral genome integration</keyword>
<keyword id="KW-0543">Viral nucleoprotein</keyword>
<keyword id="KW-1163">Viral penetration into host nucleus</keyword>
<keyword id="KW-1188">Viral release from host cell</keyword>
<keyword id="KW-0946">Virion</keyword>
<keyword id="KW-0917">Virion maturation</keyword>
<keyword id="KW-1160">Virus entry into host cell</keyword>
<keyword id="KW-0862">Zinc</keyword>
<keyword id="KW-0863">Zinc-finger</keyword>
<accession>P27973</accession>
<reference key="1">
    <citation type="journal article" date="1990" name="J. Virol.">
        <title>Simian immunodeficiency viruses from African green monkeys display unusual genetic diversity.</title>
        <authorList>
            <person name="Johnson P.R."/>
            <person name="Fomsgaard A."/>
            <person name="Allan J.S."/>
            <person name="Gravell M."/>
            <person name="London W.T."/>
            <person name="Olmstead R.A."/>
            <person name="Hirsch V.M."/>
        </authorList>
    </citation>
    <scope>NUCLEOTIDE SEQUENCE [GENOMIC RNA]</scope>
</reference>
<organismHost>
    <name type="scientific">Cercopithecidae</name>
    <name type="common">Old World monkeys</name>
    <dbReference type="NCBI Taxonomy" id="9527"/>
</organismHost>
<organism>
    <name type="scientific">Simian immunodeficiency virus agm.vervet (isolate AGM155)</name>
    <name type="common">SIV-agm.ver</name>
    <name type="synonym">Simian immunodeficiency virus African green monkey vervet</name>
    <dbReference type="NCBI Taxonomy" id="11727"/>
    <lineage>
        <taxon>Viruses</taxon>
        <taxon>Riboviria</taxon>
        <taxon>Pararnavirae</taxon>
        <taxon>Artverviricota</taxon>
        <taxon>Revtraviricetes</taxon>
        <taxon>Ortervirales</taxon>
        <taxon>Retroviridae</taxon>
        <taxon>Orthoretrovirinae</taxon>
        <taxon>Lentivirus</taxon>
        <taxon>Simian immunodeficiency virus</taxon>
    </lineage>
</organism>
<evidence type="ECO:0000250" key="1"/>
<evidence type="ECO:0000250" key="2">
    <source>
        <dbReference type="UniProtKB" id="P03366"/>
    </source>
</evidence>
<evidence type="ECO:0000250" key="3">
    <source>
        <dbReference type="UniProtKB" id="P03367"/>
    </source>
</evidence>
<evidence type="ECO:0000250" key="4">
    <source>
        <dbReference type="UniProtKB" id="P04585"/>
    </source>
</evidence>
<evidence type="ECO:0000250" key="5">
    <source>
        <dbReference type="UniProtKB" id="P04591"/>
    </source>
</evidence>
<evidence type="ECO:0000250" key="6">
    <source>
        <dbReference type="UniProtKB" id="P12493"/>
    </source>
</evidence>
<evidence type="ECO:0000250" key="7">
    <source>
        <dbReference type="UniProtKB" id="P12497"/>
    </source>
</evidence>
<evidence type="ECO:0000255" key="8"/>
<evidence type="ECO:0000255" key="9">
    <source>
        <dbReference type="PROSITE-ProRule" id="PRU00047"/>
    </source>
</evidence>
<evidence type="ECO:0000255" key="10">
    <source>
        <dbReference type="PROSITE-ProRule" id="PRU00275"/>
    </source>
</evidence>
<evidence type="ECO:0000255" key="11">
    <source>
        <dbReference type="PROSITE-ProRule" id="PRU00405"/>
    </source>
</evidence>
<evidence type="ECO:0000255" key="12">
    <source>
        <dbReference type="PROSITE-ProRule" id="PRU00408"/>
    </source>
</evidence>
<evidence type="ECO:0000255" key="13">
    <source>
        <dbReference type="PROSITE-ProRule" id="PRU00450"/>
    </source>
</evidence>
<evidence type="ECO:0000255" key="14">
    <source>
        <dbReference type="PROSITE-ProRule" id="PRU00457"/>
    </source>
</evidence>
<evidence type="ECO:0000255" key="15">
    <source>
        <dbReference type="PROSITE-ProRule" id="PRU00506"/>
    </source>
</evidence>
<evidence type="ECO:0000255" key="16">
    <source>
        <dbReference type="PROSITE-ProRule" id="PRU10094"/>
    </source>
</evidence>
<evidence type="ECO:0000256" key="17">
    <source>
        <dbReference type="SAM" id="MobiDB-lite"/>
    </source>
</evidence>
<evidence type="ECO:0000305" key="18"/>
<dbReference type="EC" id="3.4.23.16"/>
<dbReference type="EC" id="2.7.7.49"/>
<dbReference type="EC" id="2.7.7.7"/>
<dbReference type="EC" id="3.1.26.13"/>
<dbReference type="EC" id="3.1.13.2"/>
<dbReference type="EC" id="2.7.7.-" evidence="4"/>
<dbReference type="EC" id="3.1.-.-" evidence="4"/>
<dbReference type="EMBL" id="M29975">
    <property type="protein sequence ID" value="AAA91906.1"/>
    <property type="molecule type" value="Genomic_RNA"/>
</dbReference>
<dbReference type="SMR" id="P27973"/>
<dbReference type="MEROPS" id="A02.003"/>
<dbReference type="PRO" id="PR:P27973"/>
<dbReference type="Proteomes" id="UP000258159">
    <property type="component" value="Segment"/>
</dbReference>
<dbReference type="GO" id="GO:0043657">
    <property type="term" value="C:host cell"/>
    <property type="evidence" value="ECO:0007669"/>
    <property type="project" value="GOC"/>
</dbReference>
<dbReference type="GO" id="GO:0030430">
    <property type="term" value="C:host cell cytoplasm"/>
    <property type="evidence" value="ECO:0007669"/>
    <property type="project" value="UniProtKB-SubCell"/>
</dbReference>
<dbReference type="GO" id="GO:0042025">
    <property type="term" value="C:host cell nucleus"/>
    <property type="evidence" value="ECO:0007669"/>
    <property type="project" value="UniProtKB-SubCell"/>
</dbReference>
<dbReference type="GO" id="GO:0020002">
    <property type="term" value="C:host cell plasma membrane"/>
    <property type="evidence" value="ECO:0007669"/>
    <property type="project" value="UniProtKB-SubCell"/>
</dbReference>
<dbReference type="GO" id="GO:0016020">
    <property type="term" value="C:membrane"/>
    <property type="evidence" value="ECO:0007669"/>
    <property type="project" value="UniProtKB-KW"/>
</dbReference>
<dbReference type="GO" id="GO:0019013">
    <property type="term" value="C:viral nucleocapsid"/>
    <property type="evidence" value="ECO:0007669"/>
    <property type="project" value="UniProtKB-KW"/>
</dbReference>
<dbReference type="GO" id="GO:0004190">
    <property type="term" value="F:aspartic-type endopeptidase activity"/>
    <property type="evidence" value="ECO:0007669"/>
    <property type="project" value="UniProtKB-KW"/>
</dbReference>
<dbReference type="GO" id="GO:0003677">
    <property type="term" value="F:DNA binding"/>
    <property type="evidence" value="ECO:0007669"/>
    <property type="project" value="UniProtKB-KW"/>
</dbReference>
<dbReference type="GO" id="GO:0003887">
    <property type="term" value="F:DNA-directed DNA polymerase activity"/>
    <property type="evidence" value="ECO:0007669"/>
    <property type="project" value="UniProtKB-KW"/>
</dbReference>
<dbReference type="GO" id="GO:0004533">
    <property type="term" value="F:exoribonuclease H activity"/>
    <property type="evidence" value="ECO:0007669"/>
    <property type="project" value="UniProtKB-EC"/>
</dbReference>
<dbReference type="GO" id="GO:0035613">
    <property type="term" value="F:RNA stem-loop binding"/>
    <property type="evidence" value="ECO:0007669"/>
    <property type="project" value="TreeGrafter"/>
</dbReference>
<dbReference type="GO" id="GO:0003964">
    <property type="term" value="F:RNA-directed DNA polymerase activity"/>
    <property type="evidence" value="ECO:0007669"/>
    <property type="project" value="UniProtKB-KW"/>
</dbReference>
<dbReference type="GO" id="GO:0004523">
    <property type="term" value="F:RNA-DNA hybrid ribonuclease activity"/>
    <property type="evidence" value="ECO:0007669"/>
    <property type="project" value="InterPro"/>
</dbReference>
<dbReference type="GO" id="GO:0005198">
    <property type="term" value="F:structural molecule activity"/>
    <property type="evidence" value="ECO:0007669"/>
    <property type="project" value="InterPro"/>
</dbReference>
<dbReference type="GO" id="GO:0008270">
    <property type="term" value="F:zinc ion binding"/>
    <property type="evidence" value="ECO:0007669"/>
    <property type="project" value="UniProtKB-KW"/>
</dbReference>
<dbReference type="GO" id="GO:0015074">
    <property type="term" value="P:DNA integration"/>
    <property type="evidence" value="ECO:0007669"/>
    <property type="project" value="UniProtKB-KW"/>
</dbReference>
<dbReference type="GO" id="GO:0006310">
    <property type="term" value="P:DNA recombination"/>
    <property type="evidence" value="ECO:0007669"/>
    <property type="project" value="UniProtKB-KW"/>
</dbReference>
<dbReference type="GO" id="GO:0075713">
    <property type="term" value="P:establishment of integrated proviral latency"/>
    <property type="evidence" value="ECO:0007669"/>
    <property type="project" value="UniProtKB-KW"/>
</dbReference>
<dbReference type="GO" id="GO:0006508">
    <property type="term" value="P:proteolysis"/>
    <property type="evidence" value="ECO:0007669"/>
    <property type="project" value="UniProtKB-KW"/>
</dbReference>
<dbReference type="GO" id="GO:0046718">
    <property type="term" value="P:symbiont entry into host cell"/>
    <property type="evidence" value="ECO:0007669"/>
    <property type="project" value="UniProtKB-KW"/>
</dbReference>
<dbReference type="GO" id="GO:0039657">
    <property type="term" value="P:symbiont-mediated suppression of host gene expression"/>
    <property type="evidence" value="ECO:0007669"/>
    <property type="project" value="UniProtKB-KW"/>
</dbReference>
<dbReference type="GO" id="GO:0044826">
    <property type="term" value="P:viral genome integration into host DNA"/>
    <property type="evidence" value="ECO:0007669"/>
    <property type="project" value="UniProtKB-KW"/>
</dbReference>
<dbReference type="GO" id="GO:0075732">
    <property type="term" value="P:viral penetration into host nucleus"/>
    <property type="evidence" value="ECO:0007669"/>
    <property type="project" value="UniProtKB-KW"/>
</dbReference>
<dbReference type="GO" id="GO:0075523">
    <property type="term" value="P:viral translational frameshifting"/>
    <property type="evidence" value="ECO:0007669"/>
    <property type="project" value="UniProtKB-KW"/>
</dbReference>
<dbReference type="CDD" id="cd05482">
    <property type="entry name" value="HIV_retropepsin_like"/>
    <property type="match status" value="1"/>
</dbReference>
<dbReference type="Gene3D" id="1.10.10.200">
    <property type="match status" value="1"/>
</dbReference>
<dbReference type="Gene3D" id="1.10.1200.30">
    <property type="match status" value="1"/>
</dbReference>
<dbReference type="Gene3D" id="3.30.70.270">
    <property type="match status" value="3"/>
</dbReference>
<dbReference type="Gene3D" id="2.40.70.10">
    <property type="entry name" value="Acid Proteases"/>
    <property type="match status" value="1"/>
</dbReference>
<dbReference type="Gene3D" id="3.10.10.10">
    <property type="entry name" value="HIV Type 1 Reverse Transcriptase, subunit A, domain 1"/>
    <property type="match status" value="1"/>
</dbReference>
<dbReference type="Gene3D" id="1.10.375.10">
    <property type="entry name" value="Human Immunodeficiency Virus Type 1 Capsid Protein"/>
    <property type="match status" value="1"/>
</dbReference>
<dbReference type="Gene3D" id="1.10.150.90">
    <property type="entry name" value="Immunodeficiency lentiviruses, gag gene matrix protein p17"/>
    <property type="match status" value="1"/>
</dbReference>
<dbReference type="Gene3D" id="2.30.30.10">
    <property type="entry name" value="Integrase, C-terminal domain superfamily, retroviral"/>
    <property type="match status" value="1"/>
</dbReference>
<dbReference type="Gene3D" id="3.30.420.10">
    <property type="entry name" value="Ribonuclease H-like superfamily/Ribonuclease H"/>
    <property type="match status" value="2"/>
</dbReference>
<dbReference type="Gene3D" id="1.20.5.760">
    <property type="entry name" value="Single helix bin"/>
    <property type="match status" value="1"/>
</dbReference>
<dbReference type="Gene3D" id="4.10.60.10">
    <property type="entry name" value="Zinc finger, CCHC-type"/>
    <property type="match status" value="1"/>
</dbReference>
<dbReference type="InterPro" id="IPR001969">
    <property type="entry name" value="Aspartic_peptidase_AS"/>
</dbReference>
<dbReference type="InterPro" id="IPR043502">
    <property type="entry name" value="DNA/RNA_pol_sf"/>
</dbReference>
<dbReference type="InterPro" id="IPR045345">
    <property type="entry name" value="Gag_p24_C"/>
</dbReference>
<dbReference type="InterPro" id="IPR017856">
    <property type="entry name" value="Integrase-like_N"/>
</dbReference>
<dbReference type="InterPro" id="IPR036862">
    <property type="entry name" value="Integrase_C_dom_sf_retrovir"/>
</dbReference>
<dbReference type="InterPro" id="IPR001037">
    <property type="entry name" value="Integrase_C_retrovir"/>
</dbReference>
<dbReference type="InterPro" id="IPR001584">
    <property type="entry name" value="Integrase_cat-core"/>
</dbReference>
<dbReference type="InterPro" id="IPR003308">
    <property type="entry name" value="Integrase_Zn-bd_dom_N"/>
</dbReference>
<dbReference type="InterPro" id="IPR000071">
    <property type="entry name" value="Lentvrl_matrix_N"/>
</dbReference>
<dbReference type="InterPro" id="IPR012344">
    <property type="entry name" value="Matrix_HIV/RSV_N"/>
</dbReference>
<dbReference type="InterPro" id="IPR001995">
    <property type="entry name" value="Peptidase_A2_cat"/>
</dbReference>
<dbReference type="InterPro" id="IPR021109">
    <property type="entry name" value="Peptidase_aspartic_dom_sf"/>
</dbReference>
<dbReference type="InterPro" id="IPR034170">
    <property type="entry name" value="Retropepsin-like_cat_dom"/>
</dbReference>
<dbReference type="InterPro" id="IPR018061">
    <property type="entry name" value="Retropepsins"/>
</dbReference>
<dbReference type="InterPro" id="IPR008916">
    <property type="entry name" value="Retrov_capsid_C"/>
</dbReference>
<dbReference type="InterPro" id="IPR008919">
    <property type="entry name" value="Retrov_capsid_N"/>
</dbReference>
<dbReference type="InterPro" id="IPR010999">
    <property type="entry name" value="Retrovr_matrix"/>
</dbReference>
<dbReference type="InterPro" id="IPR043128">
    <property type="entry name" value="Rev_trsase/Diguanyl_cyclase"/>
</dbReference>
<dbReference type="InterPro" id="IPR012337">
    <property type="entry name" value="RNaseH-like_sf"/>
</dbReference>
<dbReference type="InterPro" id="IPR002156">
    <property type="entry name" value="RNaseH_domain"/>
</dbReference>
<dbReference type="InterPro" id="IPR036397">
    <property type="entry name" value="RNaseH_sf"/>
</dbReference>
<dbReference type="InterPro" id="IPR000477">
    <property type="entry name" value="RT_dom"/>
</dbReference>
<dbReference type="InterPro" id="IPR010659">
    <property type="entry name" value="RVT_connect"/>
</dbReference>
<dbReference type="InterPro" id="IPR010661">
    <property type="entry name" value="RVT_thumb"/>
</dbReference>
<dbReference type="InterPro" id="IPR001878">
    <property type="entry name" value="Znf_CCHC"/>
</dbReference>
<dbReference type="InterPro" id="IPR036875">
    <property type="entry name" value="Znf_CCHC_sf"/>
</dbReference>
<dbReference type="PANTHER" id="PTHR41694">
    <property type="entry name" value="ENDOGENOUS RETROVIRUS GROUP K MEMBER POL PROTEIN"/>
    <property type="match status" value="1"/>
</dbReference>
<dbReference type="PANTHER" id="PTHR41694:SF3">
    <property type="entry name" value="RNA-DIRECTED DNA POLYMERASE-RELATED"/>
    <property type="match status" value="1"/>
</dbReference>
<dbReference type="Pfam" id="PF00540">
    <property type="entry name" value="Gag_p17"/>
    <property type="match status" value="1"/>
</dbReference>
<dbReference type="Pfam" id="PF00607">
    <property type="entry name" value="Gag_p24"/>
    <property type="match status" value="1"/>
</dbReference>
<dbReference type="Pfam" id="PF19317">
    <property type="entry name" value="Gag_p24_C"/>
    <property type="match status" value="1"/>
</dbReference>
<dbReference type="Pfam" id="PF00552">
    <property type="entry name" value="IN_DBD_C"/>
    <property type="match status" value="1"/>
</dbReference>
<dbReference type="Pfam" id="PF02022">
    <property type="entry name" value="Integrase_Zn"/>
    <property type="match status" value="1"/>
</dbReference>
<dbReference type="Pfam" id="PF00075">
    <property type="entry name" value="RNase_H"/>
    <property type="match status" value="1"/>
</dbReference>
<dbReference type="Pfam" id="PF00665">
    <property type="entry name" value="rve"/>
    <property type="match status" value="1"/>
</dbReference>
<dbReference type="Pfam" id="PF00077">
    <property type="entry name" value="RVP"/>
    <property type="match status" value="1"/>
</dbReference>
<dbReference type="Pfam" id="PF00078">
    <property type="entry name" value="RVT_1"/>
    <property type="match status" value="1"/>
</dbReference>
<dbReference type="Pfam" id="PF06815">
    <property type="entry name" value="RVT_connect"/>
    <property type="match status" value="1"/>
</dbReference>
<dbReference type="Pfam" id="PF06817">
    <property type="entry name" value="RVT_thumb"/>
    <property type="match status" value="1"/>
</dbReference>
<dbReference type="Pfam" id="PF00098">
    <property type="entry name" value="zf-CCHC"/>
    <property type="match status" value="2"/>
</dbReference>
<dbReference type="PRINTS" id="PR00234">
    <property type="entry name" value="HIV1MATRIX"/>
</dbReference>
<dbReference type="SMART" id="SM00343">
    <property type="entry name" value="ZnF_C2HC"/>
    <property type="match status" value="2"/>
</dbReference>
<dbReference type="SUPFAM" id="SSF50630">
    <property type="entry name" value="Acid proteases"/>
    <property type="match status" value="1"/>
</dbReference>
<dbReference type="SUPFAM" id="SSF50122">
    <property type="entry name" value="DNA-binding domain of retroviral integrase"/>
    <property type="match status" value="1"/>
</dbReference>
<dbReference type="SUPFAM" id="SSF56672">
    <property type="entry name" value="DNA/RNA polymerases"/>
    <property type="match status" value="1"/>
</dbReference>
<dbReference type="SUPFAM" id="SSF46919">
    <property type="entry name" value="N-terminal Zn binding domain of HIV integrase"/>
    <property type="match status" value="1"/>
</dbReference>
<dbReference type="SUPFAM" id="SSF47836">
    <property type="entry name" value="Retroviral matrix proteins"/>
    <property type="match status" value="1"/>
</dbReference>
<dbReference type="SUPFAM" id="SSF47353">
    <property type="entry name" value="Retrovirus capsid dimerization domain-like"/>
    <property type="match status" value="1"/>
</dbReference>
<dbReference type="SUPFAM" id="SSF47943">
    <property type="entry name" value="Retrovirus capsid protein, N-terminal core domain"/>
    <property type="match status" value="1"/>
</dbReference>
<dbReference type="SUPFAM" id="SSF57756">
    <property type="entry name" value="Retrovirus zinc finger-like domains"/>
    <property type="match status" value="1"/>
</dbReference>
<dbReference type="SUPFAM" id="SSF53098">
    <property type="entry name" value="Ribonuclease H-like"/>
    <property type="match status" value="2"/>
</dbReference>
<dbReference type="PROSITE" id="PS50175">
    <property type="entry name" value="ASP_PROT_RETROV"/>
    <property type="match status" value="1"/>
</dbReference>
<dbReference type="PROSITE" id="PS00141">
    <property type="entry name" value="ASP_PROTEASE"/>
    <property type="match status" value="1"/>
</dbReference>
<dbReference type="PROSITE" id="PS50994">
    <property type="entry name" value="INTEGRASE"/>
    <property type="match status" value="1"/>
</dbReference>
<dbReference type="PROSITE" id="PS51027">
    <property type="entry name" value="INTEGRASE_DBD"/>
    <property type="match status" value="1"/>
</dbReference>
<dbReference type="PROSITE" id="PS50879">
    <property type="entry name" value="RNASE_H_1"/>
    <property type="match status" value="1"/>
</dbReference>
<dbReference type="PROSITE" id="PS50878">
    <property type="entry name" value="RT_POL"/>
    <property type="match status" value="1"/>
</dbReference>
<dbReference type="PROSITE" id="PS50158">
    <property type="entry name" value="ZF_CCHC"/>
    <property type="match status" value="2"/>
</dbReference>
<dbReference type="PROSITE" id="PS50876">
    <property type="entry name" value="ZF_INTEGRASE"/>
    <property type="match status" value="1"/>
</dbReference>
<protein>
    <recommendedName>
        <fullName>Gag-Pol polyprotein</fullName>
    </recommendedName>
    <alternativeName>
        <fullName>Pr160Gag-Pol</fullName>
    </alternativeName>
    <component>
        <recommendedName>
            <fullName>Matrix protein p17</fullName>
            <shortName>MA</shortName>
        </recommendedName>
    </component>
    <component>
        <recommendedName>
            <fullName>Capsid protein p24</fullName>
            <shortName>CA</shortName>
        </recommendedName>
    </component>
    <component>
        <recommendedName>
            <fullName>Nucleocapsid protein p7</fullName>
            <shortName>NC</shortName>
        </recommendedName>
    </component>
    <component>
        <recommendedName>
            <fullName>p6-pol</fullName>
            <shortName>p6*</shortName>
        </recommendedName>
    </component>
    <component>
        <recommendedName>
            <fullName>Protease</fullName>
            <ecNumber>3.4.23.16</ecNumber>
        </recommendedName>
        <alternativeName>
            <fullName>PR</fullName>
        </alternativeName>
        <alternativeName>
            <fullName>Retropepsin</fullName>
        </alternativeName>
    </component>
    <component>
        <recommendedName>
            <fullName>Reverse transcriptase/ribonuclease H</fullName>
            <ecNumber>2.7.7.49</ecNumber>
            <ecNumber>2.7.7.7</ecNumber>
            <ecNumber>3.1.26.13</ecNumber>
        </recommendedName>
        <alternativeName>
            <fullName>Exoribonuclease H</fullName>
            <ecNumber>3.1.13.2</ecNumber>
        </alternativeName>
        <alternativeName>
            <fullName>p66 RT</fullName>
        </alternativeName>
    </component>
    <component>
        <recommendedName>
            <fullName>p51 RT</fullName>
        </recommendedName>
    </component>
    <component>
        <recommendedName>
            <fullName>p15</fullName>
        </recommendedName>
    </component>
    <component>
        <recommendedName>
            <fullName>Integrase</fullName>
            <shortName>IN</shortName>
            <ecNumber evidence="4">2.7.7.-</ecNumber>
            <ecNumber evidence="4">3.1.-.-</ecNumber>
        </recommendedName>
    </component>
</protein>
<feature type="initiator methionine" description="Removed; by host" evidence="1">
    <location>
        <position position="1"/>
    </location>
</feature>
<feature type="chain" id="PRO_0000305985" description="Gag-Pol polyprotein">
    <location>
        <begin position="2"/>
        <end position="1470"/>
    </location>
</feature>
<feature type="chain" id="PRO_0000305986" description="Matrix protein p17" evidence="1">
    <location>
        <begin position="2"/>
        <end position="141"/>
    </location>
</feature>
<feature type="chain" id="PRO_0000305987" description="Capsid protein p24" evidence="1">
    <location>
        <begin position="142"/>
        <end position="372"/>
    </location>
</feature>
<feature type="chain" id="PRO_0000305988" description="Nucleocapsid protein p7" evidence="1">
    <location>
        <begin position="373"/>
        <end position="439"/>
    </location>
</feature>
<feature type="chain" id="PRO_0000305989" description="p6-pol" evidence="8">
    <location>
        <begin position="440"/>
        <end position="511"/>
    </location>
</feature>
<feature type="chain" id="PRO_0000305990" description="Protease" evidence="1">
    <location>
        <begin position="512"/>
        <end position="612"/>
    </location>
</feature>
<feature type="chain" id="PRO_0000305991" description="Reverse transcriptase/ribonuclease H" evidence="1">
    <location>
        <begin position="613"/>
        <end position="1173"/>
    </location>
</feature>
<feature type="chain" id="PRO_0000305992" description="p51 RT" evidence="1">
    <location>
        <begin position="613"/>
        <end position="1053"/>
    </location>
</feature>
<feature type="chain" id="PRO_0000305993" description="p15" evidence="1">
    <location>
        <begin position="1054"/>
        <end position="1173"/>
    </location>
</feature>
<feature type="chain" id="PRO_0000305994" description="Integrase" evidence="1">
    <location>
        <begin position="1174"/>
        <end position="1470"/>
    </location>
</feature>
<feature type="domain" description="Peptidase A2" evidence="10">
    <location>
        <begin position="531"/>
        <end position="602"/>
    </location>
</feature>
<feature type="domain" description="Reverse transcriptase" evidence="11">
    <location>
        <begin position="658"/>
        <end position="848"/>
    </location>
</feature>
<feature type="domain" description="RNase H type-1" evidence="12">
    <location>
        <begin position="1047"/>
        <end position="1170"/>
    </location>
</feature>
<feature type="domain" description="Integrase catalytic" evidence="14">
    <location>
        <begin position="1227"/>
        <end position="1377"/>
    </location>
</feature>
<feature type="zinc finger region" description="CCHC-type 1" evidence="9">
    <location>
        <begin position="398"/>
        <end position="415"/>
    </location>
</feature>
<feature type="zinc finger region" description="CCHC-type 2" evidence="9">
    <location>
        <begin position="419"/>
        <end position="436"/>
    </location>
</feature>
<feature type="zinc finger region" description="Integrase-type" evidence="13">
    <location>
        <begin position="1176"/>
        <end position="1217"/>
    </location>
</feature>
<feature type="DNA-binding region" description="Integrase-type" evidence="15">
    <location>
        <begin position="1396"/>
        <end position="1443"/>
    </location>
</feature>
<feature type="region of interest" description="Disordered" evidence="17">
    <location>
        <begin position="117"/>
        <end position="144"/>
    </location>
</feature>
<feature type="region of interest" description="Disordered" evidence="17">
    <location>
        <begin position="479"/>
        <end position="504"/>
    </location>
</feature>
<feature type="region of interest" description="RT 'primer grip'" evidence="1">
    <location>
        <begin position="841"/>
        <end position="849"/>
    </location>
</feature>
<feature type="region of interest" description="Disordered" evidence="17">
    <location>
        <begin position="1451"/>
        <end position="1470"/>
    </location>
</feature>
<feature type="short sequence motif" description="Nuclear export signal" evidence="1">
    <location>
        <begin position="16"/>
        <end position="22"/>
    </location>
</feature>
<feature type="short sequence motif" description="Nuclear localization signal" evidence="1">
    <location>
        <begin position="26"/>
        <end position="32"/>
    </location>
</feature>
<feature type="short sequence motif" description="Tryptophan repeat motif" evidence="1">
    <location>
        <begin position="1011"/>
        <end position="1027"/>
    </location>
</feature>
<feature type="compositionally biased region" description="Polar residues" evidence="17">
    <location>
        <begin position="122"/>
        <end position="144"/>
    </location>
</feature>
<feature type="compositionally biased region" description="Basic and acidic residues" evidence="17">
    <location>
        <begin position="486"/>
        <end position="504"/>
    </location>
</feature>
<feature type="active site" description="For protease activity; shared with dimeric partner" evidence="16">
    <location>
        <position position="536"/>
    </location>
</feature>
<feature type="binding site" evidence="1">
    <location>
        <position position="724"/>
    </location>
    <ligand>
        <name>Mg(2+)</name>
        <dbReference type="ChEBI" id="CHEBI:18420"/>
        <label>1</label>
        <note>catalytic; for reverse transcriptase activity</note>
    </ligand>
</feature>
<feature type="binding site" evidence="1">
    <location>
        <position position="799"/>
    </location>
    <ligand>
        <name>Mg(2+)</name>
        <dbReference type="ChEBI" id="CHEBI:18420"/>
        <label>1</label>
        <note>catalytic; for reverse transcriptase activity</note>
    </ligand>
</feature>
<feature type="binding site" evidence="1">
    <location>
        <position position="800"/>
    </location>
    <ligand>
        <name>Mg(2+)</name>
        <dbReference type="ChEBI" id="CHEBI:18420"/>
        <label>1</label>
        <note>catalytic; for reverse transcriptase activity</note>
    </ligand>
</feature>
<feature type="binding site" evidence="1">
    <location>
        <position position="1056"/>
    </location>
    <ligand>
        <name>Mg(2+)</name>
        <dbReference type="ChEBI" id="CHEBI:18420"/>
        <label>2</label>
        <note>catalytic; for RNase H activity</note>
    </ligand>
</feature>
<feature type="binding site" evidence="1">
    <location>
        <position position="1091"/>
    </location>
    <ligand>
        <name>Mg(2+)</name>
        <dbReference type="ChEBI" id="CHEBI:18420"/>
        <label>2</label>
        <note>catalytic; for RNase H activity</note>
    </ligand>
</feature>
<feature type="binding site" evidence="1">
    <location>
        <position position="1111"/>
    </location>
    <ligand>
        <name>Mg(2+)</name>
        <dbReference type="ChEBI" id="CHEBI:18420"/>
        <label>2</label>
        <note>catalytic; for RNase H activity</note>
    </ligand>
</feature>
<feature type="binding site" evidence="1">
    <location>
        <position position="1162"/>
    </location>
    <ligand>
        <name>Mg(2+)</name>
        <dbReference type="ChEBI" id="CHEBI:18420"/>
        <label>2</label>
        <note>catalytic; for RNase H activity</note>
    </ligand>
</feature>
<feature type="binding site" evidence="13">
    <location>
        <position position="1185"/>
    </location>
    <ligand>
        <name>Zn(2+)</name>
        <dbReference type="ChEBI" id="CHEBI:29105"/>
    </ligand>
</feature>
<feature type="binding site" evidence="13">
    <location>
        <position position="1189"/>
    </location>
    <ligand>
        <name>Zn(2+)</name>
        <dbReference type="ChEBI" id="CHEBI:29105"/>
    </ligand>
</feature>
<feature type="binding site" evidence="13">
    <location>
        <position position="1213"/>
    </location>
    <ligand>
        <name>Zn(2+)</name>
        <dbReference type="ChEBI" id="CHEBI:29105"/>
    </ligand>
</feature>
<feature type="binding site" evidence="13">
    <location>
        <position position="1216"/>
    </location>
    <ligand>
        <name>Zn(2+)</name>
        <dbReference type="ChEBI" id="CHEBI:29105"/>
    </ligand>
</feature>
<feature type="binding site" evidence="1">
    <location>
        <position position="1237"/>
    </location>
    <ligand>
        <name>Mg(2+)</name>
        <dbReference type="ChEBI" id="CHEBI:18420"/>
        <label>3</label>
        <note>catalytic; for integrase activity</note>
    </ligand>
</feature>
<feature type="binding site" evidence="1">
    <location>
        <position position="1289"/>
    </location>
    <ligand>
        <name>Mg(2+)</name>
        <dbReference type="ChEBI" id="CHEBI:18420"/>
        <label>3</label>
        <note>catalytic; for integrase activity</note>
    </ligand>
</feature>
<feature type="site" description="Cleavage; by viral protease" evidence="1">
    <location>
        <begin position="141"/>
        <end position="142"/>
    </location>
</feature>
<feature type="site" description="Cis/trans isomerization of proline peptide bond; by human PPIA/CYPA" evidence="1">
    <location>
        <begin position="229"/>
        <end position="230"/>
    </location>
</feature>
<feature type="site" description="Cleavage; by viral protease" evidence="1">
    <location>
        <begin position="372"/>
        <end position="373"/>
    </location>
</feature>
<feature type="site" description="Cleavage; by viral protease" evidence="1">
    <location>
        <begin position="439"/>
        <end position="440"/>
    </location>
</feature>
<feature type="site" description="Cleavage; by viral protease" evidence="1">
    <location>
        <begin position="511"/>
        <end position="512"/>
    </location>
</feature>
<feature type="site" description="Cleavage; by viral protease" evidence="8">
    <location>
        <begin position="612"/>
        <end position="613"/>
    </location>
</feature>
<feature type="site" description="Essential for RT p66/p51 heterodimerization" evidence="1">
    <location>
        <position position="1014"/>
    </location>
</feature>
<feature type="site" description="Essential for RT p66/p51 heterodimerization" evidence="1">
    <location>
        <position position="1027"/>
    </location>
</feature>
<feature type="site" description="Cleavage; by viral protease" evidence="1">
    <location>
        <begin position="1053"/>
        <end position="1054"/>
    </location>
</feature>
<feature type="site" description="Cleavage; by viral protease" evidence="1">
    <location>
        <begin position="1173"/>
        <end position="1174"/>
    </location>
</feature>
<feature type="lipid moiety-binding region" description="N-myristoyl glycine; by host" evidence="1">
    <location>
        <position position="2"/>
    </location>
</feature>
<name>POL_SIVV1</name>
<comment type="function">
    <text evidence="1">Gag-Pol polyprotein and Gag polyprotein may regulate their own translation, by the binding genomic RNA in the 5'-UTR. At low concentration, Gag-Pol and Gag would promote translation, whereas at high concentration, the polyproteins encapsidate genomic RNA and then shut off translation (By similarity).</text>
</comment>
<comment type="function">
    <text evidence="1">Matrix protein p17 has two main functions: in infected cell, it targets Gag and Gag-pol polyproteins to the plasma membrane via a multipartite membrane-binding signal, that includes its myristointegration complex. The myristoylation signal and the NLS exert conflicting influences its subcellular localization. The key regulation of these motifs might be phosphorylation of a portion of MA molecules on the C-terminal tyrosine at the time of virus maturation, by virion-associated cellular tyrosine kinase. Implicated in the release from host cell mediated by Vpu (By similarity).</text>
</comment>
<comment type="function">
    <text evidence="1">Capsid protein p24 forms the conical core that encapsulates the genomic RNA-nucleocapsid complex in the virion. The core is constituted by capsid protein hexamer subunits. The core is disassembled soon after virion entry. Interaction with host PPIA/CYPA protects the virus from restriction by host TRIM5-alpha and from an unknown antiviral activity in host cells. This capsid restriction by TRIM5 is one of the factors which restricts SIV to the simian species (By similarity).</text>
</comment>
<comment type="function">
    <text evidence="1">Nucleocapsid protein p7 encapsulates and protects viral dimeric unspliced (genomic) RNA. Binds these RNAs through its zinc fingers. Facilitates rearangement of nucleic acid secondary structure during retrotranscription of genomic RNA. This capability is referred to as nucleic acid chaperone activity (By similarity).</text>
</comment>
<comment type="function">
    <text evidence="10">The aspartyl protease mediates proteolytic cleavages of Gag and Gag-Pol polyproteins during or shortly after the release of the virion from the plasma membrane. Cleavages take place as an ordered, step-wise cascade to yield mature proteins. This process is called maturation. Displays maximal activity during the budding process just prior to particle release from the cell. Also cleaves Nef and Vif, probably concomitantly with viral structural proteins on maturation of virus particles. Hydrolyzes host EIF4GI and PABP1 in order to shut off the capped cellular mRNA translation. The resulting inhibition of cellular protein synthesis serves to ensure maximal viral gene expression and to evade host immune response (By similarity).</text>
</comment>
<comment type="function">
    <text evidence="1">Reverse transcriptase/ribonuclease H (RT) is a multifunctional enzyme that converts the viral dimeric RNA genome into dsDNA in the cytoplasm, shortly after virus entry into the cell. This enzyme displays a DNA polymerase activity that can copy either DNA or RNA templates, and a ribonuclease H (RNase H) activity that cleaves the RNA strand of RNA-DNA heteroduplexes in a partially processive 3' to 5' endonucleasic mode. Conversion of viral genomic RNA into dsDNA requires many steps. A tRNA binds to the primer-binding site (PBS) situated at the 5'-end of the viral RNA. RT uses the 3' end of the tRNA primer to perform a short round of RNA-dependent minus-strand DNA synthesis. The reading proceeds through the U5 region and ends after the repeated (R) region which is present at both ends of viral RNA. The portion of the RNA-DNA heteroduplex is digested by the RNase H, resulting in a ssDNA product attached to the tRNA primer. This ssDNA/tRNA hybridizes with the identical R region situated at the 3' end of viral RNA. This template exchange, known as minus-strand DNA strong stop transfer, can be either intra- or intermolecular. RT uses the 3' end of this newly synthesized short ssDNA to perform the RNA-dependent minus-strand DNA synthesis of the whole template. RNase H digests the RNA template except for two polypurine tracts (PPTs) situated at the 5'-end and near the center of the genome. It is not clear if both polymerase and RNase H activities are simultaneous. RNase H can probably proceed both in a polymerase-dependent (RNA cut into small fragments by the same RT performing DNA synthesis) and a polymerase-independent mode (cleavage of remaining RNA fragments by free RTs). Secondly, RT performs DNA-directed plus-strand DNA synthesis using the PPTs that have not been removed by RNase H as primers. PPTs and tRNA primers are then removed by RNase H. The 3' and 5' ssDNA PBS regions hybridize to form a circular dsDNA intermediate. Strand displacement synthesis by RT to the PBS and PPT ends produces a blunt ended, linear dsDNA copy of the viral genome that includes long terminal repeats (LTRs) at both ends (By similarity).</text>
</comment>
<comment type="function">
    <text evidence="1">Integrase catalyzes viral DNA integration into the host chromosome, by performing a series of DNA cutting and joining reactions. This enzyme activity takes place after virion entry into a cell and reverse transcription of the RNA genome in dsDNA. The first step in the integration process is 3' processing. This step requires a complex comprising the viral genome, matrix protein, Vpr and integrase. This complex is called the pre-integration complex (PIC). The integrase protein removes 2 nucleotides from each 3' end of the viral DNA, leaving recessed CA OH's at the 3' ends. In the second step, the PIC enters cell nucleus. This process is mediated through integrase and Vpr proteins, and allows the virus to infect a non dividing cell. This ability to enter the nucleus is specific of lentiviruses, other retroviruses cannot and rely on cell division to access cell chromosomes. In the third step, termed strand transfer, the integrase protein joins the previously processed 3' ends to the 5' ends of strands of target cellular DNA at the site of integration. The 5'-ends are produced by integrase-catalyzed staggered cuts, 5 bp apart. A Y-shaped, gapped, recombination intermediate results, with the 5'-ends of the viral DNA strands and the 3' ends of target DNA strands remaining unjoined, flanking a gap of 5 bp. The last step is viral DNA integration into host chromosome. This involves host DNA repair synthesis in which the 5 bp gaps between the unjoined strands are filled in and then ligated. Since this process occurs at both cuts flanking the SIV genome, a 5 bp duplication of host DNA is produced at the ends of SIV integration. Alternatively, Integrase may catalyze the excision of viral DNA just after strand transfer, this is termed disintegration (By similarity).</text>
</comment>
<comment type="catalytic activity">
    <reaction evidence="10">
        <text>Specific for a P1 residue that is hydrophobic, and P1' variable, but often Pro.</text>
        <dbReference type="EC" id="3.4.23.16"/>
    </reaction>
</comment>
<comment type="catalytic activity">
    <reaction>
        <text>Endohydrolysis of RNA in RNA/DNA hybrids. Three different cleavage modes: 1. sequence-specific internal cleavage of RNA. Human immunodeficiency virus type 1 and Moloney murine leukemia virus enzymes prefer to cleave the RNA strand one nucleotide away from the RNA-DNA junction. 2. RNA 5'-end directed cleavage 13-19 nucleotides from the RNA end. 3. DNA 3'-end directed cleavage 15-20 nucleotides away from the primer terminus.</text>
        <dbReference type="EC" id="3.1.26.13"/>
    </reaction>
</comment>
<comment type="catalytic activity">
    <reaction>
        <text>3'-end directed exonucleolytic cleavage of viral RNA-DNA hybrid.</text>
        <dbReference type="EC" id="3.1.13.2"/>
    </reaction>
</comment>
<comment type="catalytic activity">
    <reaction evidence="11">
        <text>DNA(n) + a 2'-deoxyribonucleoside 5'-triphosphate = DNA(n+1) + diphosphate</text>
        <dbReference type="Rhea" id="RHEA:22508"/>
        <dbReference type="Rhea" id="RHEA-COMP:17339"/>
        <dbReference type="Rhea" id="RHEA-COMP:17340"/>
        <dbReference type="ChEBI" id="CHEBI:33019"/>
        <dbReference type="ChEBI" id="CHEBI:61560"/>
        <dbReference type="ChEBI" id="CHEBI:173112"/>
        <dbReference type="EC" id="2.7.7.49"/>
    </reaction>
</comment>
<comment type="catalytic activity">
    <reaction evidence="11">
        <text>DNA(n) + a 2'-deoxyribonucleoside 5'-triphosphate = DNA(n+1) + diphosphate</text>
        <dbReference type="Rhea" id="RHEA:22508"/>
        <dbReference type="Rhea" id="RHEA-COMP:17339"/>
        <dbReference type="Rhea" id="RHEA-COMP:17340"/>
        <dbReference type="ChEBI" id="CHEBI:33019"/>
        <dbReference type="ChEBI" id="CHEBI:61560"/>
        <dbReference type="ChEBI" id="CHEBI:173112"/>
        <dbReference type="EC" id="2.7.7.7"/>
    </reaction>
</comment>
<comment type="cofactor">
    <cofactor evidence="1">
        <name>Mg(2+)</name>
        <dbReference type="ChEBI" id="CHEBI:18420"/>
    </cofactor>
    <text evidence="1">Binds 2 magnesium ions for reverse transcriptase polymerase activity.</text>
</comment>
<comment type="cofactor">
    <cofactor evidence="1">
        <name>Mg(2+)</name>
        <dbReference type="ChEBI" id="CHEBI:18420"/>
    </cofactor>
    <text evidence="1">Binds 2 magnesium ions for ribonuclease H (RNase H) activity. Substrate-binding is a precondition for magnesium binding.</text>
</comment>
<comment type="cofactor">
    <cofactor evidence="1">
        <name>Mg(2+)</name>
        <dbReference type="ChEBI" id="CHEBI:18420"/>
    </cofactor>
    <text evidence="1">Magnesium ions are required for integrase activity. Binds at least 1, maybe 2 magnesium ions.</text>
</comment>
<comment type="activity regulation">
    <text>The viral protease is inhibited by many synthetic protease inhibitors (PIs), such as amprenavir, atazanavir, indinavir, loprinavir, nelfinavir, ritonavir and saquinavir. RT can be inhibited either by nucleoside RT inhibitors (NRTIs) or by non nucleoside RT inhibitors (NNRTIs). NRTIs act as chain terminators, whereas NNRTIs inhibit DNA polymerization by binding a small hydrophobic pocket near the RT active site and inducing an allosteric change in this region. Classical NRTIs are abacavir, adefovir (PMEA), didanosine (ddI), lamivudine (3TC), stavudine (d4T), tenofovir (PMPA), zalcitabine (ddC), and zidovudine (AZT). Classical NNRTIs are atevirdine (BHAP U-87201E), delavirdine, efavirenz (DMP-266), emivirine (I-EBU), and nevirapine (BI-RG-587). The tritherapies used as a basic effective treatment of AIDS associate two NRTIs and one NNRTI. Use of protease inhibitors in tritherapy regimens permit more ambitious therapeutic strategies.</text>
</comment>
<comment type="subunit">
    <molecule>Matrix protein p17</molecule>
    <text evidence="5 6">Homotrimer. Interacts with gp41 (via C-terminus).</text>
</comment>
<comment type="subunit">
    <molecule>Protease</molecule>
    <text evidence="4 7">Homodimer. The active site consists of two apposed aspartic acid residues.</text>
</comment>
<comment type="subunit">
    <molecule>Reverse transcriptase/ribonuclease H</molecule>
    <text evidence="2">Heterodimer of p66 RT and p51 RT (RT p66/p51). Heterodimerization of RT is essential for DNA polymerase activity. Despite the sequence identities, p66 RT and p51 RT have distinct folding.</text>
</comment>
<comment type="subunit">
    <molecule>Integrase</molecule>
    <text evidence="3">Homotetramer; may further associate as a homohexadecamer (By similarity).</text>
</comment>
<comment type="subcellular location">
    <molecule>Matrix protein p17</molecule>
    <subcellularLocation>
        <location evidence="18">Virion</location>
    </subcellularLocation>
    <subcellularLocation>
        <location evidence="1">Host nucleus</location>
    </subcellularLocation>
    <subcellularLocation>
        <location evidence="1">Host cytoplasm</location>
    </subcellularLocation>
    <subcellularLocation>
        <location evidence="18">Host cell membrane</location>
        <topology evidence="18">Lipid-anchor</topology>
    </subcellularLocation>
    <text evidence="1">Following virus entry, the nuclear localization signal (NLS) of the matrix protein participates with Vpr to the nuclear localization of the viral genome. During virus production, the nuclear export activity of the matrix protein counteracts the NLS to maintain the Gag and Gag-Pol polyproteins in the cytoplasm, thereby directing unspliced RNA to the plasma membrane (By similarity).</text>
</comment>
<comment type="subcellular location">
    <molecule>Capsid protein p24</molecule>
    <subcellularLocation>
        <location evidence="18">Virion</location>
    </subcellularLocation>
</comment>
<comment type="subcellular location">
    <molecule>Nucleocapsid protein p7</molecule>
    <subcellularLocation>
        <location evidence="18">Virion</location>
    </subcellularLocation>
</comment>
<comment type="subcellular location">
    <molecule>Reverse transcriptase/ribonuclease H</molecule>
    <subcellularLocation>
        <location evidence="18">Virion</location>
    </subcellularLocation>
</comment>
<comment type="subcellular location">
    <molecule>Integrase</molecule>
    <subcellularLocation>
        <location evidence="18">Virion</location>
    </subcellularLocation>
    <subcellularLocation>
        <location evidence="18">Host nucleus</location>
    </subcellularLocation>
    <subcellularLocation>
        <location evidence="18">Host cytoplasm</location>
    </subcellularLocation>
    <text evidence="18">Nuclear at initial phase, cytoplasmic at assembly.</text>
</comment>
<comment type="alternative products">
    <event type="ribosomal frameshifting"/>
    <isoform>
        <id>P27973-1</id>
        <name>Gag-Pol polyprotein</name>
        <sequence type="displayed"/>
    </isoform>
    <isoform>
        <id>P27972-1</id>
        <name>Gag polyprotein</name>
        <sequence type="external"/>
    </isoform>
    <text>Translation results in the formation of the Gag polyprotein most of the time. Ribosomal frameshifting at the gag-pol genes boundary occurs at low frequency and produces the Gag-Pol polyprotein. This strategy of translation probably allows the virus to modulate the quantity of each viral protein. Maintenance of a correct Gag to Gag-Pol ratio is essential for RNA dimerization and viral infectivity.</text>
</comment>
<comment type="domain">
    <text evidence="1">The p66 RT is structured in five subdomains: finger, palm, thumb, connection and RNase H. Within the palm subdomain, the 'primer grip' region is thought to be involved in the positioning of the primer terminus for accommodating the incoming nucleotide. The RNase H domain stabilizes the association of RT with primer-template (By similarity).</text>
</comment>
<comment type="domain">
    <text evidence="1">The tryptophan repeat motif is involved in RT p66/p51 dimerization.</text>
</comment>
<comment type="PTM">
    <text evidence="11">Specific enzymatic cleavages by the viral protease yield mature proteins. The protease is released by autocatalytic cleavage. The polyprotein is cleaved during and after budding, this process is termed maturation. Proteolytic cleavage of p66 RT removes the RNase H domain to yield the p51 RT subunit.</text>
</comment>
<comment type="PTM">
    <text>Capsid protein p24 is phosphorylated.</text>
</comment>
<comment type="miscellaneous">
    <text>The 155 isolate is from a monkey imported from Kenya.</text>
</comment>
<comment type="miscellaneous">
    <text>The reverse transcriptase is an error-prone enzyme that lacks a proof-reading function. High mutations rate is a direct consequence of this characteristic. RT also displays frequent template switching leading to high recombination rate. Recombination mostly occurs between homologous regions of the two copackaged RNA genomes. If these two RNA molecules derive from different viral strains, reverse transcription will give rise to highly recombinated proviral DNAs.</text>
</comment>
<comment type="miscellaneous">
    <molecule>Isoform Gag-Pol polyprotein</molecule>
    <text>Produced by -1 ribosomal frameshifting.</text>
</comment>
<proteinExistence type="inferred from homology"/>